<evidence type="ECO:0000255" key="1">
    <source>
        <dbReference type="HAMAP-Rule" id="MF_00707"/>
    </source>
</evidence>
<accession>Q2FG84</accession>
<comment type="similarity">
    <text evidence="1">Belongs to the UPF0735 family.</text>
</comment>
<organism>
    <name type="scientific">Staphylococcus aureus (strain USA300)</name>
    <dbReference type="NCBI Taxonomy" id="367830"/>
    <lineage>
        <taxon>Bacteria</taxon>
        <taxon>Bacillati</taxon>
        <taxon>Bacillota</taxon>
        <taxon>Bacilli</taxon>
        <taxon>Bacillales</taxon>
        <taxon>Staphylococcaceae</taxon>
        <taxon>Staphylococcus</taxon>
    </lineage>
</organism>
<gene>
    <name type="ordered locus">SAUSA300_1599</name>
</gene>
<feature type="chain" id="PRO_0000366323" description="UPF0735 ACT domain-containing protein SAUSA300_1599">
    <location>
        <begin position="1"/>
        <end position="151"/>
    </location>
</feature>
<feature type="domain" description="ACT" evidence="1">
    <location>
        <begin position="74"/>
        <end position="149"/>
    </location>
</feature>
<name>Y1599_STAA3</name>
<sequence>MDNKDYKKFYLIREDVLPESVVKTLKIKDALKSDPTLSIYDAVKQFDLSRSAFYKYRETIFPVDDKMLDHREFTLILYVTDIVGMLARVLDVISKLELSVLTIHQSIPMEEKATITLSLNAKSKETSVEDVIGALRNLDYVSKVELISMSM</sequence>
<proteinExistence type="inferred from homology"/>
<reference key="1">
    <citation type="journal article" date="2006" name="Lancet">
        <title>Complete genome sequence of USA300, an epidemic clone of community-acquired meticillin-resistant Staphylococcus aureus.</title>
        <authorList>
            <person name="Diep B.A."/>
            <person name="Gill S.R."/>
            <person name="Chang R.F."/>
            <person name="Phan T.H."/>
            <person name="Chen J.H."/>
            <person name="Davidson M.G."/>
            <person name="Lin F."/>
            <person name="Lin J."/>
            <person name="Carleton H.A."/>
            <person name="Mongodin E.F."/>
            <person name="Sensabaugh G.F."/>
            <person name="Perdreau-Remington F."/>
        </authorList>
    </citation>
    <scope>NUCLEOTIDE SEQUENCE [LARGE SCALE GENOMIC DNA]</scope>
    <source>
        <strain>USA300</strain>
    </source>
</reference>
<dbReference type="EMBL" id="CP000255">
    <property type="protein sequence ID" value="ABD21463.1"/>
    <property type="molecule type" value="Genomic_DNA"/>
</dbReference>
<dbReference type="RefSeq" id="WP_000368902.1">
    <property type="nucleotide sequence ID" value="NZ_CP027476.1"/>
</dbReference>
<dbReference type="SMR" id="Q2FG84"/>
<dbReference type="KEGG" id="saa:SAUSA300_1599"/>
<dbReference type="HOGENOM" id="CLU_128147_0_0_9"/>
<dbReference type="OMA" id="FYLVQED"/>
<dbReference type="Proteomes" id="UP000001939">
    <property type="component" value="Chromosome"/>
</dbReference>
<dbReference type="Gene3D" id="3.30.70.260">
    <property type="match status" value="1"/>
</dbReference>
<dbReference type="HAMAP" id="MF_00707">
    <property type="entry name" value="UPF0735"/>
    <property type="match status" value="1"/>
</dbReference>
<dbReference type="InterPro" id="IPR045865">
    <property type="entry name" value="ACT-like_dom_sf"/>
</dbReference>
<dbReference type="InterPro" id="IPR002912">
    <property type="entry name" value="ACT_dom"/>
</dbReference>
<dbReference type="InterPro" id="IPR008310">
    <property type="entry name" value="UPF0735_ACT_dom-cont"/>
</dbReference>
<dbReference type="NCBIfam" id="NF003361">
    <property type="entry name" value="PRK04435.1"/>
    <property type="match status" value="1"/>
</dbReference>
<dbReference type="PIRSF" id="PIRSF025624">
    <property type="entry name" value="ACT_PheB"/>
    <property type="match status" value="1"/>
</dbReference>
<dbReference type="SUPFAM" id="SSF55021">
    <property type="entry name" value="ACT-like"/>
    <property type="match status" value="1"/>
</dbReference>
<dbReference type="PROSITE" id="PS51671">
    <property type="entry name" value="ACT"/>
    <property type="match status" value="1"/>
</dbReference>
<protein>
    <recommendedName>
        <fullName evidence="1">UPF0735 ACT domain-containing protein SAUSA300_1599</fullName>
    </recommendedName>
</protein>